<reference evidence="4" key="1">
    <citation type="journal article" date="1996" name="Mol. Microbiol.">
        <title>Molecular cloning and functional analysis of a novel macrolide-resistance determinant, mefA, from Streptococcus pyogenes.</title>
        <authorList>
            <person name="Clancy J."/>
            <person name="Petitpas J."/>
            <person name="Dib-Hajj F."/>
            <person name="Yuan W."/>
            <person name="Cronan M."/>
            <person name="Kamath A.V."/>
            <person name="Bergeron J."/>
            <person name="Retsema J.A."/>
        </authorList>
    </citation>
    <scope>NUCLEOTIDE SEQUENCE [GENOMIC DNA]</scope>
    <scope>FUNCTION</scope>
    <source>
        <strain evidence="4">02C 1064</strain>
    </source>
</reference>
<reference evidence="5" key="2">
    <citation type="submission" date="2000-01" db="EMBL/GenBank/DDBJ databases">
        <title>Characterization of a genetic element carrying the macrolide efflux gene mef(A) in streptococcus pneumoniae.</title>
        <authorList>
            <person name="Santagati M."/>
            <person name="Iannelli F."/>
            <person name="Oggioni M.R."/>
            <person name="Stefani S."/>
            <person name="Pozzi G."/>
        </authorList>
    </citation>
    <scope>NUCLEOTIDE SEQUENCE [GENOMIC DNA]</scope>
    <source>
        <strain evidence="5">2812A</strain>
    </source>
</reference>
<comment type="function">
    <text evidence="2">Confers resistance to 14-membered macrolides including erythromycin and to 15-membered macrolides but not to 16-membered macrolides, lincosamides or analogs of streptogramin B. May function as an efflux pump to regulate intracellular macrolide levels.</text>
</comment>
<comment type="subcellular location">
    <subcellularLocation>
        <location evidence="1">Cell membrane</location>
        <topology evidence="1">Multi-pass membrane protein</topology>
    </subcellularLocation>
</comment>
<comment type="similarity">
    <text evidence="3">Belongs to the major facilitator superfamily. Drug:H(+) antiporter-3 (DHA3) (TC 2.A.1.21) family.</text>
</comment>
<evidence type="ECO:0000255" key="1"/>
<evidence type="ECO:0000269" key="2">
    <source>
    </source>
</evidence>
<evidence type="ECO:0000305" key="3"/>
<evidence type="ECO:0000312" key="4">
    <source>
        <dbReference type="EMBL" id="AAC44785.1"/>
    </source>
</evidence>
<evidence type="ECO:0000312" key="5">
    <source>
        <dbReference type="EMBL" id="AAL73129.1"/>
    </source>
</evidence>
<keyword id="KW-0046">Antibiotic resistance</keyword>
<keyword id="KW-1003">Cell membrane</keyword>
<keyword id="KW-0472">Membrane</keyword>
<keyword id="KW-0812">Transmembrane</keyword>
<keyword id="KW-1133">Transmembrane helix</keyword>
<keyword id="KW-0813">Transport</keyword>
<name>MEFA_STRPY</name>
<protein>
    <recommendedName>
        <fullName evidence="5">Macrolide efflux protein A</fullName>
    </recommendedName>
</protein>
<sequence>MEKYNNWKLKFYTIWAGQAVSLITSAILQMAIIFYLTEKTGSAMVLSMASLLGFLPYAVFGPAIGVLVDRHDRKKIMIGADLIIAAAGSVLTIVAFYMELPVWMVMIVLFIRSIGTAFHTPALNAVTPLLVPEEQLTKCAGYSQSLQSISYIVSPAVAALLYSVWELNAIIAIDVLGAVIASITVAIVRIPKLGDRVQSLDPNFIREMQEGMAVLRQNKGLFALLLVGTLYMFVYMPINALFPLISMDYFNGTPVHISITEISFASGMLIGGLLLGLFGNYQKRILLITASIFMMGISLTISGLLPQSGFFIFVVCCAIMGLSVPFYSGVQTALFQEKIKPEYLGRVFSLTGSIMSLAMPIGLILSALFADRIGVNHWFLLSGTLIICIAIVCPMINEIRKLDLK</sequence>
<accession>P95827</accession>
<proteinExistence type="inferred from homology"/>
<organism>
    <name type="scientific">Streptococcus pyogenes</name>
    <dbReference type="NCBI Taxonomy" id="1314"/>
    <lineage>
        <taxon>Bacteria</taxon>
        <taxon>Bacillati</taxon>
        <taxon>Bacillota</taxon>
        <taxon>Bacilli</taxon>
        <taxon>Lactobacillales</taxon>
        <taxon>Streptococcaceae</taxon>
        <taxon>Streptococcus</taxon>
    </lineage>
</organism>
<gene>
    <name evidence="5" type="primary">mefA</name>
</gene>
<dbReference type="EMBL" id="U70055">
    <property type="protein sequence ID" value="AAC44785.1"/>
    <property type="molecule type" value="Genomic_DNA"/>
</dbReference>
<dbReference type="EMBL" id="AF227521">
    <property type="protein sequence ID" value="AAL73129.1"/>
    <property type="molecule type" value="Genomic_DNA"/>
</dbReference>
<dbReference type="RefSeq" id="WP_000417517.1">
    <property type="nucleotide sequence ID" value="NG_047957.1"/>
</dbReference>
<dbReference type="SMR" id="P95827"/>
<dbReference type="CARD" id="ARO:3000616">
    <property type="molecule name" value="mel"/>
    <property type="mechanism identifier" value="ARO:0001003"/>
    <property type="mechanism name" value="antibiotic target protection"/>
</dbReference>
<dbReference type="TCDB" id="2.A.1.21.1">
    <property type="family name" value="the major facilitator superfamily (mfs)"/>
</dbReference>
<dbReference type="KEGG" id="ag:AAC44785"/>
<dbReference type="OMA" id="WFALTFW"/>
<dbReference type="GO" id="GO:0005886">
    <property type="term" value="C:plasma membrane"/>
    <property type="evidence" value="ECO:0007669"/>
    <property type="project" value="UniProtKB-SubCell"/>
</dbReference>
<dbReference type="GO" id="GO:0022857">
    <property type="term" value="F:transmembrane transporter activity"/>
    <property type="evidence" value="ECO:0007669"/>
    <property type="project" value="InterPro"/>
</dbReference>
<dbReference type="GO" id="GO:0046677">
    <property type="term" value="P:response to antibiotic"/>
    <property type="evidence" value="ECO:0007669"/>
    <property type="project" value="UniProtKB-KW"/>
</dbReference>
<dbReference type="CDD" id="cd06173">
    <property type="entry name" value="MFS_MefA_like"/>
    <property type="match status" value="1"/>
</dbReference>
<dbReference type="Gene3D" id="1.20.1250.20">
    <property type="entry name" value="MFS general substrate transporter like domains"/>
    <property type="match status" value="1"/>
</dbReference>
<dbReference type="InterPro" id="IPR004751">
    <property type="entry name" value="Drug_antiport"/>
</dbReference>
<dbReference type="InterPro" id="IPR020846">
    <property type="entry name" value="MFS_dom"/>
</dbReference>
<dbReference type="InterPro" id="IPR036259">
    <property type="entry name" value="MFS_trans_sf"/>
</dbReference>
<dbReference type="InterPro" id="IPR010290">
    <property type="entry name" value="TM_effector"/>
</dbReference>
<dbReference type="NCBIfam" id="TIGR00900">
    <property type="entry name" value="2A0121"/>
    <property type="match status" value="1"/>
</dbReference>
<dbReference type="NCBIfam" id="NF000245">
    <property type="entry name" value="macrolide_MefA"/>
    <property type="match status" value="1"/>
</dbReference>
<dbReference type="PANTHER" id="PTHR43266:SF10">
    <property type="entry name" value="BACILYSIN EXPORTER BACE-RELATED"/>
    <property type="match status" value="1"/>
</dbReference>
<dbReference type="PANTHER" id="PTHR43266">
    <property type="entry name" value="MACROLIDE-EFFLUX PROTEIN"/>
    <property type="match status" value="1"/>
</dbReference>
<dbReference type="Pfam" id="PF05977">
    <property type="entry name" value="MFS_3"/>
    <property type="match status" value="1"/>
</dbReference>
<dbReference type="SUPFAM" id="SSF103473">
    <property type="entry name" value="MFS general substrate transporter"/>
    <property type="match status" value="1"/>
</dbReference>
<dbReference type="PROSITE" id="PS50850">
    <property type="entry name" value="MFS"/>
    <property type="match status" value="1"/>
</dbReference>
<feature type="chain" id="PRO_0000408964" description="Macrolide efflux protein A">
    <location>
        <begin position="1"/>
        <end position="405"/>
    </location>
</feature>
<feature type="transmembrane region" description="Helical" evidence="1">
    <location>
        <begin position="14"/>
        <end position="34"/>
    </location>
</feature>
<feature type="transmembrane region" description="Helical" evidence="1">
    <location>
        <begin position="48"/>
        <end position="68"/>
    </location>
</feature>
<feature type="transmembrane region" description="Helical" evidence="1">
    <location>
        <begin position="76"/>
        <end position="98"/>
    </location>
</feature>
<feature type="transmembrane region" description="Helical" evidence="1">
    <location>
        <begin position="145"/>
        <end position="165"/>
    </location>
</feature>
<feature type="transmembrane region" description="Helical" evidence="1">
    <location>
        <begin position="168"/>
        <end position="188"/>
    </location>
</feature>
<feature type="transmembrane region" description="Helical" evidence="1">
    <location>
        <begin position="222"/>
        <end position="242"/>
    </location>
</feature>
<feature type="transmembrane region" description="Helical" evidence="1">
    <location>
        <begin position="259"/>
        <end position="279"/>
    </location>
</feature>
<feature type="transmembrane region" description="Helical" evidence="1">
    <location>
        <begin position="285"/>
        <end position="305"/>
    </location>
</feature>
<feature type="transmembrane region" description="Helical" evidence="1">
    <location>
        <begin position="310"/>
        <end position="330"/>
    </location>
</feature>
<feature type="transmembrane region" description="Helical" evidence="1">
    <location>
        <begin position="350"/>
        <end position="370"/>
    </location>
</feature>
<feature type="transmembrane region" description="Helical" evidence="1">
    <location>
        <begin position="373"/>
        <end position="393"/>
    </location>
</feature>